<gene>
    <name evidence="1" type="primary">eno</name>
    <name type="ordered locus">SYNAS_06680</name>
    <name type="ORF">SYN_01733</name>
</gene>
<sequence>MTEIIEVHAREILDSRGNPTVEAEVTLLSGISGRASVPSGASTGEHEMLELRDGDPKRYLGKGVTQAVNNVIEKIAPEIVGMDCLNQRDIDYTMIALDGTENKGALGANAILSVSIACAKAAAAVVELPLYRYLGGVQAKDIPVPMMNIINGGQHADNNVDIQEFMIMPVGAPTFREGLRMSAEVFHNLKAVLKGKGYNTAVGDEGGFAPNLASNEEALAVIMAAITRAGYEPGKDIAIALDAAASSFYEKGKYILAAEKKPEKTADEMIRFYEDLANRYPIISLEDGLAEDDWEGWKALTQAMGSRIQIVGDDLFVTNKKRLEQGISKGIANSILIKLNQIGSLTETLETIQTAKEAGYTNVVSHRSGETEDSFMADVAVAANCGQIKSGSLSRSERLAKYNQLLRIEEELGDRAVYRGRSALYSVR</sequence>
<feature type="chain" id="PRO_0000267128" description="Enolase">
    <location>
        <begin position="1"/>
        <end position="428"/>
    </location>
</feature>
<feature type="active site" description="Proton donor" evidence="1">
    <location>
        <position position="205"/>
    </location>
</feature>
<feature type="active site" description="Proton acceptor" evidence="1">
    <location>
        <position position="338"/>
    </location>
</feature>
<feature type="binding site" evidence="1">
    <location>
        <position position="163"/>
    </location>
    <ligand>
        <name>(2R)-2-phosphoglycerate</name>
        <dbReference type="ChEBI" id="CHEBI:58289"/>
    </ligand>
</feature>
<feature type="binding site" evidence="1">
    <location>
        <position position="242"/>
    </location>
    <ligand>
        <name>Mg(2+)</name>
        <dbReference type="ChEBI" id="CHEBI:18420"/>
    </ligand>
</feature>
<feature type="binding site" evidence="1">
    <location>
        <position position="286"/>
    </location>
    <ligand>
        <name>Mg(2+)</name>
        <dbReference type="ChEBI" id="CHEBI:18420"/>
    </ligand>
</feature>
<feature type="binding site" evidence="1">
    <location>
        <position position="313"/>
    </location>
    <ligand>
        <name>Mg(2+)</name>
        <dbReference type="ChEBI" id="CHEBI:18420"/>
    </ligand>
</feature>
<feature type="binding site" evidence="1">
    <location>
        <position position="338"/>
    </location>
    <ligand>
        <name>(2R)-2-phosphoglycerate</name>
        <dbReference type="ChEBI" id="CHEBI:58289"/>
    </ligand>
</feature>
<feature type="binding site" evidence="1">
    <location>
        <position position="367"/>
    </location>
    <ligand>
        <name>(2R)-2-phosphoglycerate</name>
        <dbReference type="ChEBI" id="CHEBI:58289"/>
    </ligand>
</feature>
<feature type="binding site" evidence="1">
    <location>
        <position position="368"/>
    </location>
    <ligand>
        <name>(2R)-2-phosphoglycerate</name>
        <dbReference type="ChEBI" id="CHEBI:58289"/>
    </ligand>
</feature>
<feature type="binding site" evidence="1">
    <location>
        <position position="389"/>
    </location>
    <ligand>
        <name>(2R)-2-phosphoglycerate</name>
        <dbReference type="ChEBI" id="CHEBI:58289"/>
    </ligand>
</feature>
<accession>Q2LR33</accession>
<comment type="function">
    <text evidence="1">Catalyzes the reversible conversion of 2-phosphoglycerate (2-PG) into phosphoenolpyruvate (PEP). It is essential for the degradation of carbohydrates via glycolysis.</text>
</comment>
<comment type="catalytic activity">
    <reaction evidence="1">
        <text>(2R)-2-phosphoglycerate = phosphoenolpyruvate + H2O</text>
        <dbReference type="Rhea" id="RHEA:10164"/>
        <dbReference type="ChEBI" id="CHEBI:15377"/>
        <dbReference type="ChEBI" id="CHEBI:58289"/>
        <dbReference type="ChEBI" id="CHEBI:58702"/>
        <dbReference type="EC" id="4.2.1.11"/>
    </reaction>
</comment>
<comment type="cofactor">
    <cofactor evidence="1">
        <name>Mg(2+)</name>
        <dbReference type="ChEBI" id="CHEBI:18420"/>
    </cofactor>
    <text evidence="1">Binds a second Mg(2+) ion via substrate during catalysis.</text>
</comment>
<comment type="pathway">
    <text evidence="1">Carbohydrate degradation; glycolysis; pyruvate from D-glyceraldehyde 3-phosphate: step 4/5.</text>
</comment>
<comment type="subcellular location">
    <subcellularLocation>
        <location evidence="1">Cytoplasm</location>
    </subcellularLocation>
    <subcellularLocation>
        <location evidence="1">Secreted</location>
    </subcellularLocation>
    <subcellularLocation>
        <location evidence="1">Cell surface</location>
    </subcellularLocation>
    <text evidence="1">Fractions of enolase are present in both the cytoplasm and on the cell surface.</text>
</comment>
<comment type="similarity">
    <text evidence="1">Belongs to the enolase family.</text>
</comment>
<dbReference type="EC" id="4.2.1.11" evidence="1"/>
<dbReference type="EMBL" id="CP000252">
    <property type="protein sequence ID" value="ABC76547.1"/>
    <property type="molecule type" value="Genomic_DNA"/>
</dbReference>
<dbReference type="RefSeq" id="WP_011416581.1">
    <property type="nucleotide sequence ID" value="NC_007759.1"/>
</dbReference>
<dbReference type="SMR" id="Q2LR33"/>
<dbReference type="FunCoup" id="Q2LR33">
    <property type="interactions" value="454"/>
</dbReference>
<dbReference type="STRING" id="56780.SYN_01733"/>
<dbReference type="KEGG" id="sat:SYN_01733"/>
<dbReference type="eggNOG" id="COG0148">
    <property type="taxonomic scope" value="Bacteria"/>
</dbReference>
<dbReference type="HOGENOM" id="CLU_031223_2_1_7"/>
<dbReference type="InParanoid" id="Q2LR33"/>
<dbReference type="OrthoDB" id="9804716at2"/>
<dbReference type="UniPathway" id="UPA00109">
    <property type="reaction ID" value="UER00187"/>
</dbReference>
<dbReference type="Proteomes" id="UP000001933">
    <property type="component" value="Chromosome"/>
</dbReference>
<dbReference type="GO" id="GO:0009986">
    <property type="term" value="C:cell surface"/>
    <property type="evidence" value="ECO:0007669"/>
    <property type="project" value="UniProtKB-SubCell"/>
</dbReference>
<dbReference type="GO" id="GO:0005576">
    <property type="term" value="C:extracellular region"/>
    <property type="evidence" value="ECO:0007669"/>
    <property type="project" value="UniProtKB-SubCell"/>
</dbReference>
<dbReference type="GO" id="GO:0000015">
    <property type="term" value="C:phosphopyruvate hydratase complex"/>
    <property type="evidence" value="ECO:0007669"/>
    <property type="project" value="InterPro"/>
</dbReference>
<dbReference type="GO" id="GO:0000287">
    <property type="term" value="F:magnesium ion binding"/>
    <property type="evidence" value="ECO:0007669"/>
    <property type="project" value="UniProtKB-UniRule"/>
</dbReference>
<dbReference type="GO" id="GO:0004634">
    <property type="term" value="F:phosphopyruvate hydratase activity"/>
    <property type="evidence" value="ECO:0007669"/>
    <property type="project" value="UniProtKB-UniRule"/>
</dbReference>
<dbReference type="GO" id="GO:0006096">
    <property type="term" value="P:glycolytic process"/>
    <property type="evidence" value="ECO:0007669"/>
    <property type="project" value="UniProtKB-UniRule"/>
</dbReference>
<dbReference type="CDD" id="cd03313">
    <property type="entry name" value="enolase"/>
    <property type="match status" value="1"/>
</dbReference>
<dbReference type="FunFam" id="3.20.20.120:FF:000001">
    <property type="entry name" value="Enolase"/>
    <property type="match status" value="1"/>
</dbReference>
<dbReference type="FunFam" id="3.30.390.10:FF:000001">
    <property type="entry name" value="Enolase"/>
    <property type="match status" value="1"/>
</dbReference>
<dbReference type="Gene3D" id="3.20.20.120">
    <property type="entry name" value="Enolase-like C-terminal domain"/>
    <property type="match status" value="1"/>
</dbReference>
<dbReference type="Gene3D" id="3.30.390.10">
    <property type="entry name" value="Enolase-like, N-terminal domain"/>
    <property type="match status" value="1"/>
</dbReference>
<dbReference type="HAMAP" id="MF_00318">
    <property type="entry name" value="Enolase"/>
    <property type="match status" value="1"/>
</dbReference>
<dbReference type="InterPro" id="IPR000941">
    <property type="entry name" value="Enolase"/>
</dbReference>
<dbReference type="InterPro" id="IPR036849">
    <property type="entry name" value="Enolase-like_C_sf"/>
</dbReference>
<dbReference type="InterPro" id="IPR029017">
    <property type="entry name" value="Enolase-like_N"/>
</dbReference>
<dbReference type="InterPro" id="IPR020810">
    <property type="entry name" value="Enolase_C"/>
</dbReference>
<dbReference type="InterPro" id="IPR020809">
    <property type="entry name" value="Enolase_CS"/>
</dbReference>
<dbReference type="InterPro" id="IPR020811">
    <property type="entry name" value="Enolase_N"/>
</dbReference>
<dbReference type="NCBIfam" id="TIGR01060">
    <property type="entry name" value="eno"/>
    <property type="match status" value="1"/>
</dbReference>
<dbReference type="PANTHER" id="PTHR11902">
    <property type="entry name" value="ENOLASE"/>
    <property type="match status" value="1"/>
</dbReference>
<dbReference type="PANTHER" id="PTHR11902:SF1">
    <property type="entry name" value="ENOLASE"/>
    <property type="match status" value="1"/>
</dbReference>
<dbReference type="Pfam" id="PF00113">
    <property type="entry name" value="Enolase_C"/>
    <property type="match status" value="1"/>
</dbReference>
<dbReference type="Pfam" id="PF03952">
    <property type="entry name" value="Enolase_N"/>
    <property type="match status" value="1"/>
</dbReference>
<dbReference type="PIRSF" id="PIRSF001400">
    <property type="entry name" value="Enolase"/>
    <property type="match status" value="1"/>
</dbReference>
<dbReference type="PRINTS" id="PR00148">
    <property type="entry name" value="ENOLASE"/>
</dbReference>
<dbReference type="SFLD" id="SFLDS00001">
    <property type="entry name" value="Enolase"/>
    <property type="match status" value="1"/>
</dbReference>
<dbReference type="SFLD" id="SFLDF00002">
    <property type="entry name" value="enolase"/>
    <property type="match status" value="1"/>
</dbReference>
<dbReference type="SMART" id="SM01192">
    <property type="entry name" value="Enolase_C"/>
    <property type="match status" value="1"/>
</dbReference>
<dbReference type="SMART" id="SM01193">
    <property type="entry name" value="Enolase_N"/>
    <property type="match status" value="1"/>
</dbReference>
<dbReference type="SUPFAM" id="SSF51604">
    <property type="entry name" value="Enolase C-terminal domain-like"/>
    <property type="match status" value="1"/>
</dbReference>
<dbReference type="SUPFAM" id="SSF54826">
    <property type="entry name" value="Enolase N-terminal domain-like"/>
    <property type="match status" value="1"/>
</dbReference>
<dbReference type="PROSITE" id="PS00164">
    <property type="entry name" value="ENOLASE"/>
    <property type="match status" value="1"/>
</dbReference>
<proteinExistence type="inferred from homology"/>
<name>ENO_SYNAS</name>
<protein>
    <recommendedName>
        <fullName evidence="1">Enolase</fullName>
        <ecNumber evidence="1">4.2.1.11</ecNumber>
    </recommendedName>
    <alternativeName>
        <fullName evidence="1">2-phospho-D-glycerate hydro-lyase</fullName>
    </alternativeName>
    <alternativeName>
        <fullName evidence="1">2-phosphoglycerate dehydratase</fullName>
    </alternativeName>
</protein>
<keyword id="KW-0963">Cytoplasm</keyword>
<keyword id="KW-0324">Glycolysis</keyword>
<keyword id="KW-0456">Lyase</keyword>
<keyword id="KW-0460">Magnesium</keyword>
<keyword id="KW-0479">Metal-binding</keyword>
<keyword id="KW-1185">Reference proteome</keyword>
<keyword id="KW-0964">Secreted</keyword>
<organism>
    <name type="scientific">Syntrophus aciditrophicus (strain SB)</name>
    <dbReference type="NCBI Taxonomy" id="56780"/>
    <lineage>
        <taxon>Bacteria</taxon>
        <taxon>Pseudomonadati</taxon>
        <taxon>Thermodesulfobacteriota</taxon>
        <taxon>Syntrophia</taxon>
        <taxon>Syntrophales</taxon>
        <taxon>Syntrophaceae</taxon>
        <taxon>Syntrophus</taxon>
    </lineage>
</organism>
<reference key="1">
    <citation type="journal article" date="2007" name="Proc. Natl. Acad. Sci. U.S.A.">
        <title>The genome of Syntrophus aciditrophicus: life at the thermodynamic limit of microbial growth.</title>
        <authorList>
            <person name="McInerney M.J."/>
            <person name="Rohlin L."/>
            <person name="Mouttaki H."/>
            <person name="Kim U."/>
            <person name="Krupp R.S."/>
            <person name="Rios-Hernandez L."/>
            <person name="Sieber J."/>
            <person name="Struchtemeyer C.G."/>
            <person name="Bhattacharyya A."/>
            <person name="Campbell J.W."/>
            <person name="Gunsalus R.P."/>
        </authorList>
    </citation>
    <scope>NUCLEOTIDE SEQUENCE [LARGE SCALE GENOMIC DNA]</scope>
    <source>
        <strain>SB</strain>
    </source>
</reference>
<evidence type="ECO:0000255" key="1">
    <source>
        <dbReference type="HAMAP-Rule" id="MF_00318"/>
    </source>
</evidence>